<organism>
    <name type="scientific">Sus scrofa</name>
    <name type="common">Pig</name>
    <dbReference type="NCBI Taxonomy" id="9823"/>
    <lineage>
        <taxon>Eukaryota</taxon>
        <taxon>Metazoa</taxon>
        <taxon>Chordata</taxon>
        <taxon>Craniata</taxon>
        <taxon>Vertebrata</taxon>
        <taxon>Euteleostomi</taxon>
        <taxon>Mammalia</taxon>
        <taxon>Eutheria</taxon>
        <taxon>Laurasiatheria</taxon>
        <taxon>Artiodactyla</taxon>
        <taxon>Suina</taxon>
        <taxon>Suidae</taxon>
        <taxon>Sus</taxon>
    </lineage>
</organism>
<proteinExistence type="evidence at protein level"/>
<accession>P02587</accession>
<keyword id="KW-0007">Acetylation</keyword>
<keyword id="KW-0106">Calcium</keyword>
<keyword id="KW-0903">Direct protein sequencing</keyword>
<keyword id="KW-0479">Metal-binding</keyword>
<keyword id="KW-0514">Muscle protein</keyword>
<keyword id="KW-1185">Reference proteome</keyword>
<keyword id="KW-0677">Repeat</keyword>
<gene>
    <name type="primary">TNNC2</name>
</gene>
<comment type="function">
    <text>Troponin is the central regulatory protein of striated muscle contraction. Tn consists of three components: Tn-I which is the inhibitor of actomyosin ATPase, Tn-T which contains the binding site for tropomyosin and Tn-C. The binding of calcium to Tn-C abolishes the inhibitory action of Tn on actin filaments.</text>
</comment>
<comment type="miscellaneous">
    <text>Skeletal muscle troponin C binds four calcium ions.</text>
</comment>
<comment type="similarity">
    <text evidence="3">Belongs to the troponin C family.</text>
</comment>
<reference key="1">
    <citation type="journal article" date="1983" name="FEBS Lett.">
        <title>Malignant hyperthermia in pigs: a search for abnormalities in Ca2+ binding proteins.</title>
        <authorList>
            <person name="Lorkin P.A."/>
            <person name="Lehmann H."/>
        </authorList>
    </citation>
    <scope>PROTEIN SEQUENCE</scope>
</reference>
<sequence>TDQQAEARSYLSEEMIAEFKAAFDMFDADGGGDISVKELGTVMRMLGQTPTKEELDAIIEEVDEDGSGTIDFEEFLVMMVRQMKEDAKGKSEEELAECFRIFDRNMDGYIDAEELAEIFRASGEHVTDEEIESIMKDGDKNNDGRIDFDEFLKMMEGVQ</sequence>
<evidence type="ECO:0000250" key="1">
    <source>
        <dbReference type="UniProtKB" id="P02585"/>
    </source>
</evidence>
<evidence type="ECO:0000255" key="2">
    <source>
        <dbReference type="PROSITE-ProRule" id="PRU00448"/>
    </source>
</evidence>
<evidence type="ECO:0000305" key="3"/>
<protein>
    <recommendedName>
        <fullName>Troponin C, skeletal muscle</fullName>
    </recommendedName>
</protein>
<name>TNNC2_PIG</name>
<feature type="chain" id="PRO_0000073705" description="Troponin C, skeletal muscle">
    <location>
        <begin position="1"/>
        <end position="159"/>
    </location>
</feature>
<feature type="domain" description="EF-hand 1" evidence="2">
    <location>
        <begin position="14"/>
        <end position="49"/>
    </location>
</feature>
<feature type="domain" description="EF-hand 2" evidence="2">
    <location>
        <begin position="50"/>
        <end position="85"/>
    </location>
</feature>
<feature type="domain" description="EF-hand 3" evidence="2">
    <location>
        <begin position="90"/>
        <end position="125"/>
    </location>
</feature>
<feature type="domain" description="EF-hand 4" evidence="2">
    <location>
        <begin position="126"/>
        <end position="159"/>
    </location>
</feature>
<feature type="binding site" evidence="2">
    <location>
        <position position="27"/>
    </location>
    <ligand>
        <name>Ca(2+)</name>
        <dbReference type="ChEBI" id="CHEBI:29108"/>
        <label>1</label>
    </ligand>
</feature>
<feature type="binding site" evidence="2">
    <location>
        <position position="29"/>
    </location>
    <ligand>
        <name>Ca(2+)</name>
        <dbReference type="ChEBI" id="CHEBI:29108"/>
        <label>1</label>
    </ligand>
</feature>
<feature type="binding site" evidence="2">
    <location>
        <position position="33"/>
    </location>
    <ligand>
        <name>Ca(2+)</name>
        <dbReference type="ChEBI" id="CHEBI:29108"/>
        <label>1</label>
    </ligand>
</feature>
<feature type="binding site" evidence="2">
    <location>
        <position position="38"/>
    </location>
    <ligand>
        <name>Ca(2+)</name>
        <dbReference type="ChEBI" id="CHEBI:29108"/>
        <label>1</label>
    </ligand>
</feature>
<feature type="binding site" evidence="2">
    <location>
        <position position="63"/>
    </location>
    <ligand>
        <name>Ca(2+)</name>
        <dbReference type="ChEBI" id="CHEBI:29108"/>
        <label>2</label>
    </ligand>
</feature>
<feature type="binding site" evidence="2">
    <location>
        <position position="65"/>
    </location>
    <ligand>
        <name>Ca(2+)</name>
        <dbReference type="ChEBI" id="CHEBI:29108"/>
        <label>2</label>
    </ligand>
</feature>
<feature type="binding site" evidence="2">
    <location>
        <position position="67"/>
    </location>
    <ligand>
        <name>Ca(2+)</name>
        <dbReference type="ChEBI" id="CHEBI:29108"/>
        <label>2</label>
    </ligand>
</feature>
<feature type="binding site" evidence="2">
    <location>
        <position position="69"/>
    </location>
    <ligand>
        <name>Ca(2+)</name>
        <dbReference type="ChEBI" id="CHEBI:29108"/>
        <label>2</label>
    </ligand>
</feature>
<feature type="binding site" evidence="2">
    <location>
        <position position="74"/>
    </location>
    <ligand>
        <name>Ca(2+)</name>
        <dbReference type="ChEBI" id="CHEBI:29108"/>
        <label>2</label>
    </ligand>
</feature>
<feature type="binding site" evidence="2">
    <location>
        <position position="103"/>
    </location>
    <ligand>
        <name>Ca(2+)</name>
        <dbReference type="ChEBI" id="CHEBI:29108"/>
        <label>3</label>
    </ligand>
</feature>
<feature type="binding site" evidence="2">
    <location>
        <position position="105"/>
    </location>
    <ligand>
        <name>Ca(2+)</name>
        <dbReference type="ChEBI" id="CHEBI:29108"/>
        <label>3</label>
    </ligand>
</feature>
<feature type="binding site" evidence="2">
    <location>
        <position position="107"/>
    </location>
    <ligand>
        <name>Ca(2+)</name>
        <dbReference type="ChEBI" id="CHEBI:29108"/>
        <label>3</label>
    </ligand>
</feature>
<feature type="binding site" evidence="2">
    <location>
        <position position="109"/>
    </location>
    <ligand>
        <name>Ca(2+)</name>
        <dbReference type="ChEBI" id="CHEBI:29108"/>
        <label>3</label>
    </ligand>
</feature>
<feature type="binding site" evidence="2">
    <location>
        <position position="114"/>
    </location>
    <ligand>
        <name>Ca(2+)</name>
        <dbReference type="ChEBI" id="CHEBI:29108"/>
        <label>3</label>
    </ligand>
</feature>
<feature type="binding site" evidence="2">
    <location>
        <position position="139"/>
    </location>
    <ligand>
        <name>Ca(2+)</name>
        <dbReference type="ChEBI" id="CHEBI:29108"/>
        <label>4</label>
    </ligand>
</feature>
<feature type="binding site" evidence="2">
    <location>
        <position position="141"/>
    </location>
    <ligand>
        <name>Ca(2+)</name>
        <dbReference type="ChEBI" id="CHEBI:29108"/>
        <label>4</label>
    </ligand>
</feature>
<feature type="binding site" evidence="2">
    <location>
        <position position="143"/>
    </location>
    <ligand>
        <name>Ca(2+)</name>
        <dbReference type="ChEBI" id="CHEBI:29108"/>
        <label>4</label>
    </ligand>
</feature>
<feature type="binding site" evidence="2">
    <location>
        <position position="145"/>
    </location>
    <ligand>
        <name>Ca(2+)</name>
        <dbReference type="ChEBI" id="CHEBI:29108"/>
        <label>4</label>
    </ligand>
</feature>
<feature type="binding site" evidence="2">
    <location>
        <position position="150"/>
    </location>
    <ligand>
        <name>Ca(2+)</name>
        <dbReference type="ChEBI" id="CHEBI:29108"/>
        <label>4</label>
    </ligand>
</feature>
<feature type="modified residue" description="N-acetylthreonine" evidence="1">
    <location>
        <position position="1"/>
    </location>
</feature>
<feature type="sequence conflict" description="In Ref. 1; AA sequence." evidence="3" ref="1">
    <original>TD</original>
    <variation>DT</variation>
    <location>
        <begin position="1"/>
        <end position="2"/>
    </location>
</feature>
<dbReference type="PIR" id="A03014">
    <property type="entry name" value="TPPGCS"/>
</dbReference>
<dbReference type="BMRB" id="P02587"/>
<dbReference type="SMR" id="P02587"/>
<dbReference type="FunCoup" id="P02587">
    <property type="interactions" value="36"/>
</dbReference>
<dbReference type="STRING" id="9823.ENSSSCP00000050173"/>
<dbReference type="PaxDb" id="9823-ENSSSCP00000007911"/>
<dbReference type="PeptideAtlas" id="P02587"/>
<dbReference type="eggNOG" id="KOG0027">
    <property type="taxonomic scope" value="Eukaryota"/>
</dbReference>
<dbReference type="InParanoid" id="P02587"/>
<dbReference type="Proteomes" id="UP000008227">
    <property type="component" value="Unplaced"/>
</dbReference>
<dbReference type="Proteomes" id="UP000314985">
    <property type="component" value="Unplaced"/>
</dbReference>
<dbReference type="Proteomes" id="UP000694570">
    <property type="component" value="Unplaced"/>
</dbReference>
<dbReference type="Proteomes" id="UP000694571">
    <property type="component" value="Unplaced"/>
</dbReference>
<dbReference type="Proteomes" id="UP000694720">
    <property type="component" value="Unplaced"/>
</dbReference>
<dbReference type="Proteomes" id="UP000694722">
    <property type="component" value="Unplaced"/>
</dbReference>
<dbReference type="Proteomes" id="UP000694723">
    <property type="component" value="Unplaced"/>
</dbReference>
<dbReference type="Proteomes" id="UP000694724">
    <property type="component" value="Unplaced"/>
</dbReference>
<dbReference type="Proteomes" id="UP000694725">
    <property type="component" value="Unplaced"/>
</dbReference>
<dbReference type="Proteomes" id="UP000694726">
    <property type="component" value="Unplaced"/>
</dbReference>
<dbReference type="Proteomes" id="UP000694727">
    <property type="component" value="Unplaced"/>
</dbReference>
<dbReference type="Proteomes" id="UP000694728">
    <property type="component" value="Unplaced"/>
</dbReference>
<dbReference type="GO" id="GO:0005861">
    <property type="term" value="C:troponin complex"/>
    <property type="evidence" value="ECO:0000318"/>
    <property type="project" value="GO_Central"/>
</dbReference>
<dbReference type="GO" id="GO:0005509">
    <property type="term" value="F:calcium ion binding"/>
    <property type="evidence" value="ECO:0007669"/>
    <property type="project" value="InterPro"/>
</dbReference>
<dbReference type="GO" id="GO:0003009">
    <property type="term" value="P:skeletal muscle contraction"/>
    <property type="evidence" value="ECO:0000318"/>
    <property type="project" value="GO_Central"/>
</dbReference>
<dbReference type="CDD" id="cd00051">
    <property type="entry name" value="EFh"/>
    <property type="match status" value="1"/>
</dbReference>
<dbReference type="FunFam" id="1.10.238.10:FF:000107">
    <property type="entry name" value="Troponin C, skeletal muscle"/>
    <property type="match status" value="1"/>
</dbReference>
<dbReference type="Gene3D" id="1.10.238.10">
    <property type="entry name" value="EF-hand"/>
    <property type="match status" value="2"/>
</dbReference>
<dbReference type="InterPro" id="IPR050230">
    <property type="entry name" value="CALM/Myosin/TropC-like"/>
</dbReference>
<dbReference type="InterPro" id="IPR011992">
    <property type="entry name" value="EF-hand-dom_pair"/>
</dbReference>
<dbReference type="InterPro" id="IPR018247">
    <property type="entry name" value="EF_Hand_1_Ca_BS"/>
</dbReference>
<dbReference type="InterPro" id="IPR002048">
    <property type="entry name" value="EF_hand_dom"/>
</dbReference>
<dbReference type="PANTHER" id="PTHR23048">
    <property type="entry name" value="MYOSIN LIGHT CHAIN 1, 3"/>
    <property type="match status" value="1"/>
</dbReference>
<dbReference type="PANTHER" id="PTHR23048:SF57">
    <property type="entry name" value="TROPONIN C2, FAST SKELETAL TYPE"/>
    <property type="match status" value="1"/>
</dbReference>
<dbReference type="Pfam" id="PF13499">
    <property type="entry name" value="EF-hand_7"/>
    <property type="match status" value="2"/>
</dbReference>
<dbReference type="SMART" id="SM00054">
    <property type="entry name" value="EFh"/>
    <property type="match status" value="4"/>
</dbReference>
<dbReference type="SUPFAM" id="SSF47473">
    <property type="entry name" value="EF-hand"/>
    <property type="match status" value="1"/>
</dbReference>
<dbReference type="PROSITE" id="PS00018">
    <property type="entry name" value="EF_HAND_1"/>
    <property type="match status" value="4"/>
</dbReference>
<dbReference type="PROSITE" id="PS50222">
    <property type="entry name" value="EF_HAND_2"/>
    <property type="match status" value="4"/>
</dbReference>